<keyword id="KW-0002">3D-structure</keyword>
<keyword id="KW-1238">Degradation of host capsule during virus entry</keyword>
<keyword id="KW-1235">Degradation of host cell envelope components during virus entry</keyword>
<keyword id="KW-0945">Host-virus interaction</keyword>
<keyword id="KW-1185">Reference proteome</keyword>
<keyword id="KW-1233">Viral attachment to host adhesion receptor</keyword>
<keyword id="KW-1161">Viral attachment to host cell</keyword>
<keyword id="KW-1227">Viral tail protein</keyword>
<keyword id="KW-0946">Virion</keyword>
<keyword id="KW-1160">Virus entry into host cell</keyword>
<dbReference type="EMBL" id="GQ413938">
    <property type="protein sequence ID" value="ACY66731.1"/>
    <property type="molecule type" value="Genomic_DNA"/>
</dbReference>
<dbReference type="RefSeq" id="YP_003347651.1">
    <property type="nucleotide sequence ID" value="NC_013649.2"/>
</dbReference>
<dbReference type="PDB" id="8BKE">
    <property type="method" value="X-ray"/>
    <property type="resolution" value="2.00 A"/>
    <property type="chains" value="AAA/BBB=1-630"/>
</dbReference>
<dbReference type="PDBsum" id="8BKE"/>
<dbReference type="SMR" id="D1L302"/>
<dbReference type="GeneID" id="8683400"/>
<dbReference type="KEGG" id="vg:8683400"/>
<dbReference type="OrthoDB" id="49at1920860"/>
<dbReference type="Proteomes" id="UP000002633">
    <property type="component" value="Genome"/>
</dbReference>
<dbReference type="GO" id="GO:0098015">
    <property type="term" value="C:virus tail"/>
    <property type="evidence" value="ECO:0007669"/>
    <property type="project" value="UniProtKB-KW"/>
</dbReference>
<dbReference type="GO" id="GO:0098671">
    <property type="term" value="P:adhesion receptor-mediated virion attachment to host cell"/>
    <property type="evidence" value="ECO:0007669"/>
    <property type="project" value="UniProtKB-KW"/>
</dbReference>
<dbReference type="GO" id="GO:0098994">
    <property type="term" value="P:symbiont entry into host cell via disruption of host cell envelope"/>
    <property type="evidence" value="ECO:0007669"/>
    <property type="project" value="UniProtKB-KW"/>
</dbReference>
<dbReference type="GO" id="GO:0098996">
    <property type="term" value="P:symbiont entry into host cell via disruption of host cell glycocalyx"/>
    <property type="evidence" value="ECO:0000314"/>
    <property type="project" value="UniProtKB"/>
</dbReference>
<feature type="chain" id="PRO_0000458725" description="Depolymerase, capsule K63-specific">
    <location>
        <begin position="1"/>
        <end position="630"/>
    </location>
</feature>
<comment type="function">
    <text evidence="2 5">Functions as a receptor binding protein (RBP) and probably mediates the attachment to the host capsular exopolysaccharides (Probable). Displays a depolymerase activity that specifically degrades the K63-type polysaccharides of Klebsiella pneumoniae capsule (PubMed:33947754).</text>
</comment>
<comment type="subunit">
    <text evidence="1">Homotrimer.</text>
</comment>
<comment type="subcellular location">
    <subcellularLocation>
        <location evidence="4">Virion</location>
    </subcellularLocation>
    <text evidence="4">Tail appendage.</text>
</comment>
<comment type="similarity">
    <text evidence="4">Belongs to the K63-specific depolymerase family.</text>
</comment>
<proteinExistence type="evidence at protein level"/>
<evidence type="ECO:0000250" key="1">
    <source>
        <dbReference type="UniProtKB" id="A0A068Q5Q5"/>
    </source>
</evidence>
<evidence type="ECO:0000269" key="2">
    <source>
    </source>
</evidence>
<evidence type="ECO:0000303" key="3">
    <source>
    </source>
</evidence>
<evidence type="ECO:0000305" key="4"/>
<evidence type="ECO:0000305" key="5">
    <source>
    </source>
</evidence>
<evidence type="ECO:0000312" key="6">
    <source>
        <dbReference type="EMBL" id="ACY66731.1"/>
    </source>
</evidence>
<gene>
    <name evidence="6" type="primary">57</name>
</gene>
<name>DEPOL_BPK34</name>
<reference key="1">
    <citation type="journal article" date="2011" name="Appl. Microbiol. Biotechnol.">
        <title>Isolation and characterisation of KP34-a novel phiKMV-like bacteriophage for Klebsiella pneumoniae.</title>
        <authorList>
            <person name="Drulis-Kawa Z."/>
            <person name="Mackiewicz P."/>
            <person name="Kesik-Szeloch A."/>
            <person name="Maciaszczyk-Dziubinska E."/>
            <person name="Weber-Dabrowska B."/>
            <person name="Dorotkiewicz-Jach A."/>
            <person name="Augustyniak D."/>
            <person name="Majkowska-Skrobek G."/>
            <person name="Bocer T."/>
            <person name="Empel J."/>
            <person name="Kropinski A.M."/>
        </authorList>
    </citation>
    <scope>NUCLEOTIDE SEQUENCE [LARGE SCALE GENOMIC DNA]</scope>
</reference>
<reference key="2">
    <citation type="journal article" date="2021" name="MBio">
        <title>Engineering the Modular Receptor-Binding Proteins of Klebsiella Phages Switches Their Capsule Serotype Specificity.</title>
        <authorList>
            <person name="Latka A."/>
            <person name="Lemire S."/>
            <person name="Grimon D."/>
            <person name="Dams D."/>
            <person name="Maciejewska B."/>
            <person name="Lu T."/>
            <person name="Drulis-Kawa Z."/>
            <person name="Briers Y."/>
        </authorList>
    </citation>
    <scope>FUNCTION</scope>
</reference>
<reference key="3">
    <citation type="journal article" date="2019" name="Front. Microbiol.">
        <title>Modeling the Architecture of Depolymerase-Containing Receptor Binding Proteins in Klebsiella Phages.</title>
        <authorList>
            <person name="Latka A."/>
            <person name="Leiman P.G."/>
            <person name="Drulis-Kawa Z."/>
            <person name="Briers Y."/>
        </authorList>
    </citation>
    <scope>REVIEW</scope>
</reference>
<sequence>MALTKLVDAGAWQVEVAPAGTVQDSLVFLSPRNFGGVPGTGVDSVAAIEAALAAGDVDLGGEHWFISRPIYCVSGRTIQNGKISTLAAQGSGFMAGSIFAPGNYHPVYVDPVPKLACSSTNGSATITVSSHEFVVGDLVRLSSTRGIIGSDAVLVPWYMQLARVVGVSGDTVKLDAPIDTTETLVVHKATPAGYNARFNKPLFVLERATFRNIEVDTWDYWTADSATFECAFEGIRGKARSVVYGNTFCRTNFDNIDITFSNKASEMAFGSHDTNLSNIKFRADSQNWDSTNSVGISWAESGRRCTLDNWQLLVPQGVNLSVLVRISSHRDVQIRKGFIQVHSSSNNILSVEHYGGDRPPCNNILFEDIDVNATGAAAVVVDVYKSANDSAINAVRFEGISYRGATPSVALMRQRGTTSNQVTGVRASLYSANGGAFLVSSAMAWDVRLYGPGLQVPAAVAVLGRTAVLSASRSNLHALRWVTEAIIGVTSTTPGNVLREAVIPAGTLRASDYIDFVISGSTGGATSTKDVLVGVLDSGSNFQGVGFTAPTTEESYYTVQGRISFPTTGNCLITATIGRAGVGVSYARTLVSISNYTTNDVKLQVQAWVGSSAGSLSVQHGCFAPSELTG</sequence>
<accession>D1L302</accession>
<organism>
    <name type="scientific">Klebsiella phage KP34</name>
    <name type="common">Bacteriophage KP34</name>
    <dbReference type="NCBI Taxonomy" id="674081"/>
    <lineage>
        <taxon>Viruses</taxon>
        <taxon>Duplodnaviria</taxon>
        <taxon>Heunggongvirae</taxon>
        <taxon>Uroviricota</taxon>
        <taxon>Caudoviricetes</taxon>
        <taxon>Autographiviridae</taxon>
        <taxon>Slopekvirinae</taxon>
        <taxon>Drulisvirus</taxon>
        <taxon>Drulisvirus KP34</taxon>
    </lineage>
</organism>
<protein>
    <recommendedName>
        <fullName evidence="4">Depolymerase, capsule K63-specific</fullName>
        <shortName evidence="4">DepoKP34</shortName>
    </recommendedName>
    <alternativeName>
        <fullName evidence="4">Gene product 57</fullName>
        <shortName evidence="4">gp57</shortName>
    </alternativeName>
    <alternativeName>
        <fullName evidence="3">KP34gp57</fullName>
    </alternativeName>
    <alternativeName>
        <fullName evidence="4">Probable tail spike protein</fullName>
    </alternativeName>
</protein>